<dbReference type="EC" id="6.5.1.2" evidence="1"/>
<dbReference type="EMBL" id="BX248583">
    <property type="protein sequence ID" value="CAD83193.1"/>
    <property type="molecule type" value="Genomic_DNA"/>
</dbReference>
<dbReference type="SMR" id="Q7VRU2"/>
<dbReference type="STRING" id="203907.Bfl507"/>
<dbReference type="KEGG" id="bfl:Bfl507"/>
<dbReference type="eggNOG" id="COG0272">
    <property type="taxonomic scope" value="Bacteria"/>
</dbReference>
<dbReference type="HOGENOM" id="CLU_007764_2_1_6"/>
<dbReference type="OrthoDB" id="9759736at2"/>
<dbReference type="Proteomes" id="UP000002192">
    <property type="component" value="Chromosome"/>
</dbReference>
<dbReference type="GO" id="GO:0005829">
    <property type="term" value="C:cytosol"/>
    <property type="evidence" value="ECO:0007669"/>
    <property type="project" value="TreeGrafter"/>
</dbReference>
<dbReference type="GO" id="GO:0003911">
    <property type="term" value="F:DNA ligase (NAD+) activity"/>
    <property type="evidence" value="ECO:0007669"/>
    <property type="project" value="UniProtKB-UniRule"/>
</dbReference>
<dbReference type="GO" id="GO:0046872">
    <property type="term" value="F:metal ion binding"/>
    <property type="evidence" value="ECO:0007669"/>
    <property type="project" value="UniProtKB-KW"/>
</dbReference>
<dbReference type="GO" id="GO:0006281">
    <property type="term" value="P:DNA repair"/>
    <property type="evidence" value="ECO:0007669"/>
    <property type="project" value="UniProtKB-KW"/>
</dbReference>
<dbReference type="GO" id="GO:0006260">
    <property type="term" value="P:DNA replication"/>
    <property type="evidence" value="ECO:0007669"/>
    <property type="project" value="UniProtKB-KW"/>
</dbReference>
<dbReference type="CDD" id="cd00114">
    <property type="entry name" value="LIGANc"/>
    <property type="match status" value="1"/>
</dbReference>
<dbReference type="FunFam" id="1.10.150.20:FF:000007">
    <property type="entry name" value="DNA ligase"/>
    <property type="match status" value="1"/>
</dbReference>
<dbReference type="Gene3D" id="1.10.150.20">
    <property type="entry name" value="5' to 3' exonuclease, C-terminal subdomain"/>
    <property type="match status" value="2"/>
</dbReference>
<dbReference type="Gene3D" id="3.30.470.30">
    <property type="entry name" value="DNA ligase/mRNA capping enzyme"/>
    <property type="match status" value="1"/>
</dbReference>
<dbReference type="Gene3D" id="1.10.287.610">
    <property type="entry name" value="Helix hairpin bin"/>
    <property type="match status" value="1"/>
</dbReference>
<dbReference type="Gene3D" id="2.40.50.140">
    <property type="entry name" value="Nucleic acid-binding proteins"/>
    <property type="match status" value="1"/>
</dbReference>
<dbReference type="HAMAP" id="MF_01588">
    <property type="entry name" value="DNA_ligase_A"/>
    <property type="match status" value="1"/>
</dbReference>
<dbReference type="InterPro" id="IPR041663">
    <property type="entry name" value="DisA/LigA_HHH"/>
</dbReference>
<dbReference type="InterPro" id="IPR001679">
    <property type="entry name" value="DNA_ligase"/>
</dbReference>
<dbReference type="InterPro" id="IPR018239">
    <property type="entry name" value="DNA_ligase_AS"/>
</dbReference>
<dbReference type="InterPro" id="IPR013839">
    <property type="entry name" value="DNAligase_adenylation"/>
</dbReference>
<dbReference type="InterPro" id="IPR013840">
    <property type="entry name" value="DNAligase_N"/>
</dbReference>
<dbReference type="InterPro" id="IPR012340">
    <property type="entry name" value="NA-bd_OB-fold"/>
</dbReference>
<dbReference type="InterPro" id="IPR004150">
    <property type="entry name" value="NAD_DNA_ligase_OB"/>
</dbReference>
<dbReference type="InterPro" id="IPR010994">
    <property type="entry name" value="RuvA_2-like"/>
</dbReference>
<dbReference type="NCBIfam" id="TIGR00575">
    <property type="entry name" value="dnlj"/>
    <property type="match status" value="1"/>
</dbReference>
<dbReference type="NCBIfam" id="NF005932">
    <property type="entry name" value="PRK07956.1"/>
    <property type="match status" value="1"/>
</dbReference>
<dbReference type="PANTHER" id="PTHR23389">
    <property type="entry name" value="CHROMOSOME TRANSMISSION FIDELITY FACTOR 18"/>
    <property type="match status" value="1"/>
</dbReference>
<dbReference type="PANTHER" id="PTHR23389:SF9">
    <property type="entry name" value="DNA LIGASE"/>
    <property type="match status" value="1"/>
</dbReference>
<dbReference type="Pfam" id="PF01653">
    <property type="entry name" value="DNA_ligase_aden"/>
    <property type="match status" value="1"/>
</dbReference>
<dbReference type="Pfam" id="PF03120">
    <property type="entry name" value="DNA_ligase_OB"/>
    <property type="match status" value="1"/>
</dbReference>
<dbReference type="Pfam" id="PF12826">
    <property type="entry name" value="HHH_2"/>
    <property type="match status" value="1"/>
</dbReference>
<dbReference type="Pfam" id="PF14520">
    <property type="entry name" value="HHH_5"/>
    <property type="match status" value="1"/>
</dbReference>
<dbReference type="Pfam" id="PF22745">
    <property type="entry name" value="Nlig-Ia"/>
    <property type="match status" value="1"/>
</dbReference>
<dbReference type="PIRSF" id="PIRSF001604">
    <property type="entry name" value="LigA"/>
    <property type="match status" value="1"/>
</dbReference>
<dbReference type="SMART" id="SM00532">
    <property type="entry name" value="LIGANc"/>
    <property type="match status" value="1"/>
</dbReference>
<dbReference type="SUPFAM" id="SSF56091">
    <property type="entry name" value="DNA ligase/mRNA capping enzyme, catalytic domain"/>
    <property type="match status" value="1"/>
</dbReference>
<dbReference type="SUPFAM" id="SSF50249">
    <property type="entry name" value="Nucleic acid-binding proteins"/>
    <property type="match status" value="1"/>
</dbReference>
<dbReference type="SUPFAM" id="SSF47781">
    <property type="entry name" value="RuvA domain 2-like"/>
    <property type="match status" value="1"/>
</dbReference>
<dbReference type="PROSITE" id="PS01055">
    <property type="entry name" value="DNA_LIGASE_N1"/>
    <property type="match status" value="1"/>
</dbReference>
<name>DNLJ_BLOFL</name>
<gene>
    <name evidence="1" type="primary">ligA</name>
    <name type="ordered locus">Bfl507</name>
</gene>
<evidence type="ECO:0000255" key="1">
    <source>
        <dbReference type="HAMAP-Rule" id="MF_01588"/>
    </source>
</evidence>
<reference key="1">
    <citation type="journal article" date="2003" name="Proc. Natl. Acad. Sci. U.S.A.">
        <title>The genome sequence of Blochmannia floridanus: comparative analysis of reduced genomes.</title>
        <authorList>
            <person name="Gil R."/>
            <person name="Silva F.J."/>
            <person name="Zientz E."/>
            <person name="Delmotte F."/>
            <person name="Gonzalez-Candelas F."/>
            <person name="Latorre A."/>
            <person name="Rausell C."/>
            <person name="Kamerbeek J."/>
            <person name="Gadau J."/>
            <person name="Hoelldobler B."/>
            <person name="van Ham R.C.H.J."/>
            <person name="Gross R."/>
            <person name="Moya A."/>
        </authorList>
    </citation>
    <scope>NUCLEOTIDE SEQUENCE [LARGE SCALE GENOMIC DNA]</scope>
</reference>
<comment type="function">
    <text evidence="1">DNA ligase that catalyzes the formation of phosphodiester linkages between 5'-phosphoryl and 3'-hydroxyl groups in double-stranded DNA using NAD as a coenzyme and as the energy source for the reaction. It is essential for DNA replication and repair of damaged DNA.</text>
</comment>
<comment type="catalytic activity">
    <reaction evidence="1">
        <text>NAD(+) + (deoxyribonucleotide)n-3'-hydroxyl + 5'-phospho-(deoxyribonucleotide)m = (deoxyribonucleotide)n+m + AMP + beta-nicotinamide D-nucleotide.</text>
        <dbReference type="EC" id="6.5.1.2"/>
    </reaction>
</comment>
<comment type="cofactor">
    <cofactor evidence="1">
        <name>Mg(2+)</name>
        <dbReference type="ChEBI" id="CHEBI:18420"/>
    </cofactor>
    <cofactor evidence="1">
        <name>Mn(2+)</name>
        <dbReference type="ChEBI" id="CHEBI:29035"/>
    </cofactor>
</comment>
<comment type="similarity">
    <text evidence="1">Belongs to the NAD-dependent DNA ligase family. LigA subfamily.</text>
</comment>
<proteinExistence type="inferred from homology"/>
<sequence>MKLIKNRVQILRERLNYLEYLYYVKSESKVSDEEYDILLEELRQLEFKYPYLITKSSSTQSISNVCDNSLNRIRHQKPMLSLNSIRDKSQLLLFDKRIKYKLSNHYNINQNLIVYCCELKIDGVALSILYKQGKLVHAATRGDGKIGENVTKNVNAIDSIPKNLKKNNNEILPDLLEIRGEIFISKLSFSKLNQEMLSSGKKVFSNARNAASGSLRQLDPHVTELRSLVFCCYGISYYAGLKQLPNSHWGRLKLCNRWGLSINNYIQIVSGIDPVLEYYNYVRKIRSELEYQIDGIVIKIDNCIYQDQLGCGFRAPNWAVAYKFPAELKLTKLNDVVFKVGRTGLITPIAYINPVVIGNVIIKKVNMHNVNEVKRLNLMIGDTVIVQRSGDVIPKILKIILENRVDNAKFIKIPEFCPSCGSILKVEDNKSSVLRCLAKLTCLAQRKSALKHFASRKAMNIQGMGSRVINQLVDKGLICTPVDFFSLSKEKLLCLDRYGEKSAERLLQSILIAKEITLSAFIYALGIPGVGESVSNKLAYMYRTIENLMNADLQSFLQLKFIGKIAAMNIYSFLHQSDNYNNIQGLIRSNLIFK</sequence>
<feature type="chain" id="PRO_0000313141" description="DNA ligase">
    <location>
        <begin position="1"/>
        <end position="594"/>
    </location>
</feature>
<feature type="active site" description="N6-AMP-lysine intermediate" evidence="1">
    <location>
        <position position="120"/>
    </location>
</feature>
<feature type="binding site" evidence="1">
    <location>
        <begin position="32"/>
        <end position="36"/>
    </location>
    <ligand>
        <name>NAD(+)</name>
        <dbReference type="ChEBI" id="CHEBI:57540"/>
    </ligand>
</feature>
<feature type="binding site" evidence="1">
    <location>
        <begin position="81"/>
        <end position="82"/>
    </location>
    <ligand>
        <name>NAD(+)</name>
        <dbReference type="ChEBI" id="CHEBI:57540"/>
    </ligand>
</feature>
<feature type="binding site" evidence="1">
    <location>
        <position position="118"/>
    </location>
    <ligand>
        <name>NAD(+)</name>
        <dbReference type="ChEBI" id="CHEBI:57540"/>
    </ligand>
</feature>
<feature type="binding site" evidence="1">
    <location>
        <position position="141"/>
    </location>
    <ligand>
        <name>NAD(+)</name>
        <dbReference type="ChEBI" id="CHEBI:57540"/>
    </ligand>
</feature>
<feature type="binding site" evidence="1">
    <location>
        <position position="181"/>
    </location>
    <ligand>
        <name>NAD(+)</name>
        <dbReference type="ChEBI" id="CHEBI:57540"/>
    </ligand>
</feature>
<feature type="binding site" evidence="1">
    <location>
        <position position="299"/>
    </location>
    <ligand>
        <name>NAD(+)</name>
        <dbReference type="ChEBI" id="CHEBI:57540"/>
    </ligand>
</feature>
<feature type="binding site" evidence="1">
    <location>
        <position position="323"/>
    </location>
    <ligand>
        <name>NAD(+)</name>
        <dbReference type="ChEBI" id="CHEBI:57540"/>
    </ligand>
</feature>
<feature type="binding site" evidence="1">
    <location>
        <position position="417"/>
    </location>
    <ligand>
        <name>Zn(2+)</name>
        <dbReference type="ChEBI" id="CHEBI:29105"/>
    </ligand>
</feature>
<feature type="binding site" evidence="1">
    <location>
        <position position="420"/>
    </location>
    <ligand>
        <name>Zn(2+)</name>
        <dbReference type="ChEBI" id="CHEBI:29105"/>
    </ligand>
</feature>
<feature type="binding site" evidence="1">
    <location>
        <position position="436"/>
    </location>
    <ligand>
        <name>Zn(2+)</name>
        <dbReference type="ChEBI" id="CHEBI:29105"/>
    </ligand>
</feature>
<feature type="binding site" evidence="1">
    <location>
        <position position="442"/>
    </location>
    <ligand>
        <name>Zn(2+)</name>
        <dbReference type="ChEBI" id="CHEBI:29105"/>
    </ligand>
</feature>
<organism>
    <name type="scientific">Blochmanniella floridana</name>
    <dbReference type="NCBI Taxonomy" id="203907"/>
    <lineage>
        <taxon>Bacteria</taxon>
        <taxon>Pseudomonadati</taxon>
        <taxon>Pseudomonadota</taxon>
        <taxon>Gammaproteobacteria</taxon>
        <taxon>Enterobacterales</taxon>
        <taxon>Enterobacteriaceae</taxon>
        <taxon>ant endosymbionts</taxon>
        <taxon>Candidatus Blochmanniella</taxon>
    </lineage>
</organism>
<accession>Q7VRU2</accession>
<keyword id="KW-0227">DNA damage</keyword>
<keyword id="KW-0234">DNA repair</keyword>
<keyword id="KW-0235">DNA replication</keyword>
<keyword id="KW-0436">Ligase</keyword>
<keyword id="KW-0460">Magnesium</keyword>
<keyword id="KW-0464">Manganese</keyword>
<keyword id="KW-0479">Metal-binding</keyword>
<keyword id="KW-0520">NAD</keyword>
<keyword id="KW-1185">Reference proteome</keyword>
<keyword id="KW-0862">Zinc</keyword>
<protein>
    <recommendedName>
        <fullName evidence="1">DNA ligase</fullName>
        <ecNumber evidence="1">6.5.1.2</ecNumber>
    </recommendedName>
    <alternativeName>
        <fullName evidence="1">Polydeoxyribonucleotide synthase [NAD(+)]</fullName>
    </alternativeName>
</protein>